<accession>Q8YT31</accession>
<protein>
    <recommendedName>
        <fullName>Imidazole glycerol phosphate synthase subunit HisF</fullName>
        <ecNumber>4.3.2.10</ecNumber>
    </recommendedName>
    <alternativeName>
        <fullName>IGP synthase cyclase subunit</fullName>
    </alternativeName>
    <alternativeName>
        <fullName>IGP synthase subunit HisF</fullName>
    </alternativeName>
    <alternativeName>
        <fullName>ImGP synthase subunit HisF</fullName>
        <shortName>IGPS subunit HisF</shortName>
    </alternativeName>
</protein>
<name>HIS6_NOSS1</name>
<proteinExistence type="inferred from homology"/>
<reference key="1">
    <citation type="journal article" date="2001" name="DNA Res.">
        <title>Complete genomic sequence of the filamentous nitrogen-fixing cyanobacterium Anabaena sp. strain PCC 7120.</title>
        <authorList>
            <person name="Kaneko T."/>
            <person name="Nakamura Y."/>
            <person name="Wolk C.P."/>
            <person name="Kuritz T."/>
            <person name="Sasamoto S."/>
            <person name="Watanabe A."/>
            <person name="Iriguchi M."/>
            <person name="Ishikawa A."/>
            <person name="Kawashima K."/>
            <person name="Kimura T."/>
            <person name="Kishida Y."/>
            <person name="Kohara M."/>
            <person name="Matsumoto M."/>
            <person name="Matsuno A."/>
            <person name="Muraki A."/>
            <person name="Nakazaki N."/>
            <person name="Shimpo S."/>
            <person name="Sugimoto M."/>
            <person name="Takazawa M."/>
            <person name="Yamada M."/>
            <person name="Yasuda M."/>
            <person name="Tabata S."/>
        </authorList>
    </citation>
    <scope>NUCLEOTIDE SEQUENCE [LARGE SCALE GENOMIC DNA]</scope>
    <source>
        <strain>PCC 7120 / SAG 25.82 / UTEX 2576</strain>
    </source>
</reference>
<comment type="function">
    <text evidence="1">IGPS catalyzes the conversion of PRFAR and glutamine to IGP, AICAR and glutamate. The HisF subunit catalyzes the cyclization activity that produces IGP and AICAR from PRFAR using the ammonia provided by the HisH subunit (By similarity).</text>
</comment>
<comment type="catalytic activity">
    <reaction>
        <text>5-[(5-phospho-1-deoxy-D-ribulos-1-ylimino)methylamino]-1-(5-phospho-beta-D-ribosyl)imidazole-4-carboxamide + L-glutamine = D-erythro-1-(imidazol-4-yl)glycerol 3-phosphate + 5-amino-1-(5-phospho-beta-D-ribosyl)imidazole-4-carboxamide + L-glutamate + H(+)</text>
        <dbReference type="Rhea" id="RHEA:24793"/>
        <dbReference type="ChEBI" id="CHEBI:15378"/>
        <dbReference type="ChEBI" id="CHEBI:29985"/>
        <dbReference type="ChEBI" id="CHEBI:58278"/>
        <dbReference type="ChEBI" id="CHEBI:58359"/>
        <dbReference type="ChEBI" id="CHEBI:58475"/>
        <dbReference type="ChEBI" id="CHEBI:58525"/>
        <dbReference type="EC" id="4.3.2.10"/>
    </reaction>
</comment>
<comment type="pathway">
    <text>Amino-acid biosynthesis; L-histidine biosynthesis; L-histidine from 5-phospho-alpha-D-ribose 1-diphosphate: step 5/9.</text>
</comment>
<comment type="subunit">
    <text evidence="1">Heterodimer of HisH and HisF.</text>
</comment>
<comment type="subcellular location">
    <subcellularLocation>
        <location evidence="1">Cytoplasm</location>
    </subcellularLocation>
</comment>
<comment type="similarity">
    <text evidence="3">Belongs to the HisA/HisF family.</text>
</comment>
<dbReference type="EC" id="4.3.2.10"/>
<dbReference type="EMBL" id="BA000019">
    <property type="protein sequence ID" value="BAB74594.1"/>
    <property type="molecule type" value="Genomic_DNA"/>
</dbReference>
<dbReference type="PIR" id="AH2167">
    <property type="entry name" value="AH2167"/>
</dbReference>
<dbReference type="RefSeq" id="WP_010997046.1">
    <property type="nucleotide sequence ID" value="NZ_RSCN01000003.1"/>
</dbReference>
<dbReference type="SMR" id="Q8YT31"/>
<dbReference type="STRING" id="103690.gene:10494930"/>
<dbReference type="KEGG" id="ana:alr2895"/>
<dbReference type="eggNOG" id="COG0107">
    <property type="taxonomic scope" value="Bacteria"/>
</dbReference>
<dbReference type="OrthoDB" id="9781903at2"/>
<dbReference type="UniPathway" id="UPA00031">
    <property type="reaction ID" value="UER00010"/>
</dbReference>
<dbReference type="Proteomes" id="UP000002483">
    <property type="component" value="Chromosome"/>
</dbReference>
<dbReference type="GO" id="GO:0005737">
    <property type="term" value="C:cytoplasm"/>
    <property type="evidence" value="ECO:0007669"/>
    <property type="project" value="UniProtKB-SubCell"/>
</dbReference>
<dbReference type="GO" id="GO:0000107">
    <property type="term" value="F:imidazoleglycerol-phosphate synthase activity"/>
    <property type="evidence" value="ECO:0007669"/>
    <property type="project" value="UniProtKB-UniRule"/>
</dbReference>
<dbReference type="GO" id="GO:0016829">
    <property type="term" value="F:lyase activity"/>
    <property type="evidence" value="ECO:0007669"/>
    <property type="project" value="UniProtKB-KW"/>
</dbReference>
<dbReference type="GO" id="GO:0000105">
    <property type="term" value="P:L-histidine biosynthetic process"/>
    <property type="evidence" value="ECO:0007669"/>
    <property type="project" value="UniProtKB-UniRule"/>
</dbReference>
<dbReference type="CDD" id="cd04731">
    <property type="entry name" value="HisF"/>
    <property type="match status" value="1"/>
</dbReference>
<dbReference type="FunFam" id="3.20.20.70:FF:000006">
    <property type="entry name" value="Imidazole glycerol phosphate synthase subunit HisF"/>
    <property type="match status" value="1"/>
</dbReference>
<dbReference type="Gene3D" id="3.20.20.70">
    <property type="entry name" value="Aldolase class I"/>
    <property type="match status" value="1"/>
</dbReference>
<dbReference type="HAMAP" id="MF_01013">
    <property type="entry name" value="HisF"/>
    <property type="match status" value="1"/>
</dbReference>
<dbReference type="InterPro" id="IPR013785">
    <property type="entry name" value="Aldolase_TIM"/>
</dbReference>
<dbReference type="InterPro" id="IPR006062">
    <property type="entry name" value="His_biosynth"/>
</dbReference>
<dbReference type="InterPro" id="IPR004651">
    <property type="entry name" value="HisF"/>
</dbReference>
<dbReference type="InterPro" id="IPR050064">
    <property type="entry name" value="IGPS_HisA/HisF"/>
</dbReference>
<dbReference type="InterPro" id="IPR011060">
    <property type="entry name" value="RibuloseP-bd_barrel"/>
</dbReference>
<dbReference type="NCBIfam" id="TIGR00735">
    <property type="entry name" value="hisF"/>
    <property type="match status" value="1"/>
</dbReference>
<dbReference type="PANTHER" id="PTHR21235:SF2">
    <property type="entry name" value="IMIDAZOLE GLYCEROL PHOSPHATE SYNTHASE HISHF"/>
    <property type="match status" value="1"/>
</dbReference>
<dbReference type="PANTHER" id="PTHR21235">
    <property type="entry name" value="IMIDAZOLE GLYCEROL PHOSPHATE SYNTHASE SUBUNIT HISF/H IGP SYNTHASE SUBUNIT HISF/H"/>
    <property type="match status" value="1"/>
</dbReference>
<dbReference type="Pfam" id="PF00977">
    <property type="entry name" value="His_biosynth"/>
    <property type="match status" value="1"/>
</dbReference>
<dbReference type="SUPFAM" id="SSF51366">
    <property type="entry name" value="Ribulose-phoshate binding barrel"/>
    <property type="match status" value="1"/>
</dbReference>
<gene>
    <name type="primary">hisF</name>
    <name type="ordered locus">alr2895</name>
</gene>
<evidence type="ECO:0000250" key="1"/>
<evidence type="ECO:0000255" key="2"/>
<evidence type="ECO:0000305" key="3"/>
<organism>
    <name type="scientific">Nostoc sp. (strain PCC 7120 / SAG 25.82 / UTEX 2576)</name>
    <dbReference type="NCBI Taxonomy" id="103690"/>
    <lineage>
        <taxon>Bacteria</taxon>
        <taxon>Bacillati</taxon>
        <taxon>Cyanobacteriota</taxon>
        <taxon>Cyanophyceae</taxon>
        <taxon>Nostocales</taxon>
        <taxon>Nostocaceae</taxon>
        <taxon>Nostoc</taxon>
    </lineage>
</organism>
<sequence length="259" mass="27919">MLSKRILPCLDVKAGRVVKGVNFVDLKDAGDPVELAKVYNDAGADELVFLDITATHEDRDTIIDVVYRTAEQVFIPLTVGGGIQSLENVKALLRAGADKVSINSAAVRDPELIDRASDHFGNQCIVVAIDARRRVDPSNPGWDVYVRGGRENTGLDALSWAKEVEKRGAGELLVTSMDADGTQAGYDIELTRAIAESVEIPVVASGGAGNCEHIYTALTEGKAEAALLASLLHYGQLSVAEIKNYLHESQVPVRLYTQF</sequence>
<feature type="chain" id="PRO_0000142107" description="Imidazole glycerol phosphate synthase subunit HisF">
    <location>
        <begin position="1"/>
        <end position="259"/>
    </location>
</feature>
<feature type="active site" evidence="2">
    <location>
        <position position="11"/>
    </location>
</feature>
<feature type="active site" evidence="2">
    <location>
        <position position="130"/>
    </location>
</feature>
<keyword id="KW-0028">Amino-acid biosynthesis</keyword>
<keyword id="KW-0963">Cytoplasm</keyword>
<keyword id="KW-0368">Histidine biosynthesis</keyword>
<keyword id="KW-0456">Lyase</keyword>
<keyword id="KW-1185">Reference proteome</keyword>